<protein>
    <recommendedName>
        <fullName>Nucleobase-ascorbate transporter 1</fullName>
        <shortName>AtNAT1</shortName>
    </recommendedName>
</protein>
<accession>Q9SHZ3</accession>
<name>NAT1_ARATH</name>
<reference key="1">
    <citation type="journal article" date="1999" name="Nature">
        <title>Sequence and analysis of chromosome 2 of the plant Arabidopsis thaliana.</title>
        <authorList>
            <person name="Lin X."/>
            <person name="Kaul S."/>
            <person name="Rounsley S.D."/>
            <person name="Shea T.P."/>
            <person name="Benito M.-I."/>
            <person name="Town C.D."/>
            <person name="Fujii C.Y."/>
            <person name="Mason T.M."/>
            <person name="Bowman C.L."/>
            <person name="Barnstead M.E."/>
            <person name="Feldblyum T.V."/>
            <person name="Buell C.R."/>
            <person name="Ketchum K.A."/>
            <person name="Lee J.J."/>
            <person name="Ronning C.M."/>
            <person name="Koo H.L."/>
            <person name="Moffat K.S."/>
            <person name="Cronin L.A."/>
            <person name="Shen M."/>
            <person name="Pai G."/>
            <person name="Van Aken S."/>
            <person name="Umayam L."/>
            <person name="Tallon L.J."/>
            <person name="Gill J.E."/>
            <person name="Adams M.D."/>
            <person name="Carrera A.J."/>
            <person name="Creasy T.H."/>
            <person name="Goodman H.M."/>
            <person name="Somerville C.R."/>
            <person name="Copenhaver G.P."/>
            <person name="Preuss D."/>
            <person name="Nierman W.C."/>
            <person name="White O."/>
            <person name="Eisen J.A."/>
            <person name="Salzberg S.L."/>
            <person name="Fraser C.M."/>
            <person name="Venter J.C."/>
        </authorList>
    </citation>
    <scope>NUCLEOTIDE SEQUENCE [LARGE SCALE GENOMIC DNA]</scope>
    <source>
        <strain>cv. Columbia</strain>
    </source>
</reference>
<reference key="2">
    <citation type="journal article" date="2017" name="Plant J.">
        <title>Araport11: a complete reannotation of the Arabidopsis thaliana reference genome.</title>
        <authorList>
            <person name="Cheng C.Y."/>
            <person name="Krishnakumar V."/>
            <person name="Chan A.P."/>
            <person name="Thibaud-Nissen F."/>
            <person name="Schobel S."/>
            <person name="Town C.D."/>
        </authorList>
    </citation>
    <scope>GENOME REANNOTATION</scope>
    <source>
        <strain>cv. Columbia</strain>
    </source>
</reference>
<reference key="3">
    <citation type="submission" date="2005-05" db="EMBL/GenBank/DDBJ databases">
        <title>Arabidopsis ORF clones.</title>
        <authorList>
            <person name="Cheuk R.F."/>
            <person name="Chen H."/>
            <person name="Kim C.J."/>
            <person name="Shinn P."/>
            <person name="Ecker J.R."/>
        </authorList>
    </citation>
    <scope>NUCLEOTIDE SEQUENCE [LARGE SCALE MRNA]</scope>
    <source>
        <strain>cv. Columbia</strain>
    </source>
</reference>
<reference key="4">
    <citation type="journal article" date="2006" name="Plant Cell Physiol.">
        <title>Identification and expression analysis of twelve members of the nucleobase-ascorbate transporter (NAT) gene family in Arabidopsis thaliana.</title>
        <authorList>
            <person name="Maurino V.G."/>
            <person name="Grube E."/>
            <person name="Zielinski J."/>
            <person name="Schild A."/>
            <person name="Fischer K."/>
            <person name="Flugge U.-I."/>
        </authorList>
    </citation>
    <scope>GENE FAMILY</scope>
    <scope>TISSUE SPECIFICITY</scope>
</reference>
<organism>
    <name type="scientific">Arabidopsis thaliana</name>
    <name type="common">Mouse-ear cress</name>
    <dbReference type="NCBI Taxonomy" id="3702"/>
    <lineage>
        <taxon>Eukaryota</taxon>
        <taxon>Viridiplantae</taxon>
        <taxon>Streptophyta</taxon>
        <taxon>Embryophyta</taxon>
        <taxon>Tracheophyta</taxon>
        <taxon>Spermatophyta</taxon>
        <taxon>Magnoliopsida</taxon>
        <taxon>eudicotyledons</taxon>
        <taxon>Gunneridae</taxon>
        <taxon>Pentapetalae</taxon>
        <taxon>rosids</taxon>
        <taxon>malvids</taxon>
        <taxon>Brassicales</taxon>
        <taxon>Brassicaceae</taxon>
        <taxon>Camelineae</taxon>
        <taxon>Arabidopsis</taxon>
    </lineage>
</organism>
<sequence length="520" mass="57131">MAEISHPPMEQLQDLEYCIDSNPPWPETVLLAFQNYILMLGTSAFIPALLVPAMGGSDGDRARVIQTLLFVAGIKTLLQALFGTRLPAVVGGSLAYVVPIAYIINDSSLQKISNDHERFIHTMRAIQGALIVASSIQIILGYSQVWGLFSRFFSPLGMAPVVGLVGLGMFQRGFPQLGNCIEIGLPMLLLVIGLTQYLKHVRPFKDVPIFERFPILICVTIVWIYAVILTASGAYRGKPSLTQHSCRTDKANLISTAPWFKFPYPLQWGPPTFSVGHSFAMMSAVLVSMVESTGAYIAASRLAIATPPPAYVLSRGIGWQGIGVLLDGLFGTGTGSTVLVENVGLLGLTRVGSRRVVQVSAGFMIVFSTLGKFGAVFASIPVPIYAALHCILFGLVAAVGLSFLQFTNMNSMRNLMITGLSLFLGISIPQFFAQYWDARHYGLVHTNAGWFNAFLNTLFMSPATVGLIIAVFMDNTMEVERSKKDRGMPWWVKFRTFRGDNRNEEFYTLPFNLNRFFPPT</sequence>
<evidence type="ECO:0000255" key="1"/>
<evidence type="ECO:0000269" key="2">
    <source>
    </source>
</evidence>
<evidence type="ECO:0000305" key="3"/>
<comment type="subcellular location">
    <subcellularLocation>
        <location evidence="3">Membrane</location>
        <topology evidence="3">Multi-pass membrane protein</topology>
    </subcellularLocation>
</comment>
<comment type="tissue specificity">
    <text evidence="2">Expressed in cotyledons 4 days after imbibition (DAI). Expressed in the minor and major veins of cotyledons and leaves, in the shoot apex and pedicels. Expressed in the root meristems, root tips and lateral root primordia.</text>
</comment>
<comment type="similarity">
    <text evidence="3">Belongs to the nucleobase:cation symporter-2 (NCS2) (TC 2.A.40) family.</text>
</comment>
<dbReference type="EMBL" id="AC007233">
    <property type="protein sequence ID" value="AAD26910.1"/>
    <property type="molecule type" value="Genomic_DNA"/>
</dbReference>
<dbReference type="EMBL" id="CP002685">
    <property type="protein sequence ID" value="AEC05969.1"/>
    <property type="molecule type" value="Genomic_DNA"/>
</dbReference>
<dbReference type="EMBL" id="BT023436">
    <property type="protein sequence ID" value="AAY56427.1"/>
    <property type="molecule type" value="mRNA"/>
</dbReference>
<dbReference type="PIR" id="D84471">
    <property type="entry name" value="D84471"/>
</dbReference>
<dbReference type="RefSeq" id="NP_178636.1">
    <property type="nucleotide sequence ID" value="NM_126592.3"/>
</dbReference>
<dbReference type="SMR" id="Q9SHZ3"/>
<dbReference type="FunCoup" id="Q9SHZ3">
    <property type="interactions" value="834"/>
</dbReference>
<dbReference type="STRING" id="3702.Q9SHZ3"/>
<dbReference type="PaxDb" id="3702-AT2G05760.1"/>
<dbReference type="ProteomicsDB" id="251249"/>
<dbReference type="EnsemblPlants" id="AT2G05760.1">
    <property type="protein sequence ID" value="AT2G05760.1"/>
    <property type="gene ID" value="AT2G05760"/>
</dbReference>
<dbReference type="GeneID" id="815127"/>
<dbReference type="Gramene" id="AT2G05760.1">
    <property type="protein sequence ID" value="AT2G05760.1"/>
    <property type="gene ID" value="AT2G05760"/>
</dbReference>
<dbReference type="KEGG" id="ath:AT2G05760"/>
<dbReference type="Araport" id="AT2G05760"/>
<dbReference type="TAIR" id="AT2G05760">
    <property type="gene designation" value="NAT1"/>
</dbReference>
<dbReference type="eggNOG" id="KOG1292">
    <property type="taxonomic scope" value="Eukaryota"/>
</dbReference>
<dbReference type="HOGENOM" id="CLU_017959_5_3_1"/>
<dbReference type="InParanoid" id="Q9SHZ3"/>
<dbReference type="OMA" id="FMEHIGD"/>
<dbReference type="OrthoDB" id="1641903at2759"/>
<dbReference type="PhylomeDB" id="Q9SHZ3"/>
<dbReference type="PRO" id="PR:Q9SHZ3"/>
<dbReference type="Proteomes" id="UP000006548">
    <property type="component" value="Chromosome 2"/>
</dbReference>
<dbReference type="ExpressionAtlas" id="Q9SHZ3">
    <property type="expression patterns" value="baseline and differential"/>
</dbReference>
<dbReference type="GO" id="GO:0016020">
    <property type="term" value="C:membrane"/>
    <property type="evidence" value="ECO:0007669"/>
    <property type="project" value="UniProtKB-SubCell"/>
</dbReference>
<dbReference type="GO" id="GO:0009506">
    <property type="term" value="C:plasmodesma"/>
    <property type="evidence" value="ECO:0007005"/>
    <property type="project" value="TAIR"/>
</dbReference>
<dbReference type="GO" id="GO:0022857">
    <property type="term" value="F:transmembrane transporter activity"/>
    <property type="evidence" value="ECO:0007669"/>
    <property type="project" value="InterPro"/>
</dbReference>
<dbReference type="InterPro" id="IPR006043">
    <property type="entry name" value="NCS2"/>
</dbReference>
<dbReference type="NCBIfam" id="NF037981">
    <property type="entry name" value="NCS2_1"/>
    <property type="match status" value="1"/>
</dbReference>
<dbReference type="PANTHER" id="PTHR11119">
    <property type="entry name" value="XANTHINE-URACIL / VITAMIN C PERMEASE FAMILY MEMBER"/>
    <property type="match status" value="1"/>
</dbReference>
<dbReference type="Pfam" id="PF00860">
    <property type="entry name" value="Xan_ur_permease"/>
    <property type="match status" value="1"/>
</dbReference>
<proteinExistence type="evidence at transcript level"/>
<feature type="chain" id="PRO_0000270158" description="Nucleobase-ascorbate transporter 1">
    <location>
        <begin position="1"/>
        <end position="520"/>
    </location>
</feature>
<feature type="transmembrane region" description="Helical" evidence="1">
    <location>
        <begin position="36"/>
        <end position="56"/>
    </location>
</feature>
<feature type="transmembrane region" description="Helical" evidence="1">
    <location>
        <begin position="64"/>
        <end position="84"/>
    </location>
</feature>
<feature type="transmembrane region" description="Helical" evidence="1">
    <location>
        <begin position="86"/>
        <end position="106"/>
    </location>
</feature>
<feature type="transmembrane region" description="Helical" evidence="1">
    <location>
        <begin position="129"/>
        <end position="149"/>
    </location>
</feature>
<feature type="transmembrane region" description="Helical" evidence="1">
    <location>
        <begin position="150"/>
        <end position="170"/>
    </location>
</feature>
<feature type="transmembrane region" description="Helical" evidence="1">
    <location>
        <begin position="174"/>
        <end position="194"/>
    </location>
</feature>
<feature type="transmembrane region" description="Helical" evidence="1">
    <location>
        <begin position="213"/>
        <end position="233"/>
    </location>
</feature>
<feature type="transmembrane region" description="Helical" evidence="1">
    <location>
        <begin position="279"/>
        <end position="299"/>
    </location>
</feature>
<feature type="transmembrane region" description="Helical" evidence="1">
    <location>
        <begin position="362"/>
        <end position="382"/>
    </location>
</feature>
<feature type="transmembrane region" description="Helical" evidence="1">
    <location>
        <begin position="384"/>
        <end position="404"/>
    </location>
</feature>
<feature type="transmembrane region" description="Helical" evidence="1">
    <location>
        <begin position="415"/>
        <end position="435"/>
    </location>
</feature>
<feature type="transmembrane region" description="Helical" evidence="1">
    <location>
        <begin position="453"/>
        <end position="473"/>
    </location>
</feature>
<gene>
    <name type="primary">NAT1</name>
    <name type="ordered locus">At2g05760</name>
    <name type="ORF">T25M19.4</name>
</gene>
<keyword id="KW-0472">Membrane</keyword>
<keyword id="KW-1185">Reference proteome</keyword>
<keyword id="KW-0812">Transmembrane</keyword>
<keyword id="KW-1133">Transmembrane helix</keyword>
<keyword id="KW-0813">Transport</keyword>